<reference key="1">
    <citation type="journal article" date="2001" name="Lancet">
        <title>Whole genome sequencing of meticillin-resistant Staphylococcus aureus.</title>
        <authorList>
            <person name="Kuroda M."/>
            <person name="Ohta T."/>
            <person name="Uchiyama I."/>
            <person name="Baba T."/>
            <person name="Yuzawa H."/>
            <person name="Kobayashi I."/>
            <person name="Cui L."/>
            <person name="Oguchi A."/>
            <person name="Aoki K."/>
            <person name="Nagai Y."/>
            <person name="Lian J.-Q."/>
            <person name="Ito T."/>
            <person name="Kanamori M."/>
            <person name="Matsumaru H."/>
            <person name="Maruyama A."/>
            <person name="Murakami H."/>
            <person name="Hosoyama A."/>
            <person name="Mizutani-Ui Y."/>
            <person name="Takahashi N.K."/>
            <person name="Sawano T."/>
            <person name="Inoue R."/>
            <person name="Kaito C."/>
            <person name="Sekimizu K."/>
            <person name="Hirakawa H."/>
            <person name="Kuhara S."/>
            <person name="Goto S."/>
            <person name="Yabuzaki J."/>
            <person name="Kanehisa M."/>
            <person name="Yamashita A."/>
            <person name="Oshima K."/>
            <person name="Furuya K."/>
            <person name="Yoshino C."/>
            <person name="Shiba T."/>
            <person name="Hattori M."/>
            <person name="Ogasawara N."/>
            <person name="Hayashi H."/>
            <person name="Hiramatsu K."/>
        </authorList>
    </citation>
    <scope>NUCLEOTIDE SEQUENCE [LARGE SCALE GENOMIC DNA]</scope>
    <source>
        <strain>Mu50 / ATCC 700699</strain>
    </source>
</reference>
<name>SECA2_STAAM</name>
<sequence>MKHKLDVTINELRLKSIRKIVKRINTWSDEVKSYSDDALKQKTIEFKERLASGVDTLDTLLPEAYAVAREASWRVLGMYPKEVQLIGAIVLHEGNIAEMQTGEGKTLTATMPLYLNALSGKGTYLITTNDYLAKRDFEEMQPLYEWLGLTASLGFVDIVDYEYQKGEKRNIYEHDIIYTTNGRLGFDYLIDNLADSAEGKFLPQLNYGIIDEVDSIILDAAQTPLVISGAPRLQSNLFHIVKEFVDTLIEDVHFKMKKTKKEIWLLNQGIEAAQSYFNVEDLYSEQAMVLVRNINLALRAQYLFESNVDYFVYNGDIVLIDRITGRMLPGTKLQAGLHQAIEAKEGMEVSTDKSVMATITFQNLFKLFESFSGMTATGKLGESEFFDLYSKIVVQAPTDKAIQRIDEPDKVFRSVDEKNIAMIHDIVELHETGRPVLLITRTAEAAEYFSKVLFQMDIPNNLLIAQNVAKEAQMIAEAGQIGSMTVATSMAGRGTDIKLGEGVEALGGLAVIIHEHMENSRVDRQLRGRSGRQGDPGSSCIYISLDDYLVKRWSDSNLAENNQLYSLDAQRLSQSNLFNRKVKQIVVKAQRISEEQGVKAREMANEFEKSISIQRDLVYEERNRVLEIDDAENRDFKALAKDVFEMFVNEEKVLTKSRVVEYIYQNLSFQFNKDVACVNFKDKQAVVTFLLEQFEKQLALNRKNMQSAYYYNIFVQKVFLKAIDSCWLEQVDYLQQLKASVNQRQNGQRNAIFEYHRVALDSFEVMTRNIKKRMVKNICQSMITFDKEGMPVIHFP</sequence>
<accession>Q99QY9</accession>
<organism>
    <name type="scientific">Staphylococcus aureus (strain Mu50 / ATCC 700699)</name>
    <dbReference type="NCBI Taxonomy" id="158878"/>
    <lineage>
        <taxon>Bacteria</taxon>
        <taxon>Bacillati</taxon>
        <taxon>Bacillota</taxon>
        <taxon>Bacilli</taxon>
        <taxon>Bacillales</taxon>
        <taxon>Staphylococcaceae</taxon>
        <taxon>Staphylococcus</taxon>
    </lineage>
</organism>
<proteinExistence type="inferred from homology"/>
<comment type="function">
    <text evidence="1">Part of the Sec protein translocase complex. Interacts with the SecYEG preprotein conducting channel. Has a central role in coupling the hydrolysis of ATP to the transfer of proteins into and across the cell membrane, serving as an ATP-driven molecular motor driving the stepwise translocation of polypeptide chains across the membrane.</text>
</comment>
<comment type="catalytic activity">
    <reaction evidence="1">
        <text>ATP + H2O + cellular proteinSide 1 = ADP + phosphate + cellular proteinSide 2.</text>
        <dbReference type="EC" id="7.4.2.8"/>
    </reaction>
</comment>
<comment type="subunit">
    <text evidence="1">Monomer and homodimer. Part of the essential Sec protein translocation apparatus which comprises SecA, SecYEG and auxiliary proteins SecDF. Other proteins may also be involved.</text>
</comment>
<comment type="subcellular location">
    <subcellularLocation>
        <location evidence="1">Cell membrane</location>
        <topology evidence="1">Peripheral membrane protein</topology>
        <orientation evidence="1">Cytoplasmic side</orientation>
    </subcellularLocation>
    <subcellularLocation>
        <location evidence="1">Cytoplasm</location>
    </subcellularLocation>
    <text evidence="1">Distribution is 50-50.</text>
</comment>
<comment type="similarity">
    <text evidence="1">Belongs to the SecA family.</text>
</comment>
<dbReference type="EC" id="7.4.2.8" evidence="1"/>
<dbReference type="EMBL" id="BA000017">
    <property type="protein sequence ID" value="BAB58811.1"/>
    <property type="molecule type" value="Genomic_DNA"/>
</dbReference>
<dbReference type="RefSeq" id="WP_000680945.1">
    <property type="nucleotide sequence ID" value="NC_002758.2"/>
</dbReference>
<dbReference type="SMR" id="Q99QY9"/>
<dbReference type="KEGG" id="sav:SAV2649"/>
<dbReference type="HOGENOM" id="CLU_005314_3_2_9"/>
<dbReference type="PhylomeDB" id="Q99QY9"/>
<dbReference type="Proteomes" id="UP000002481">
    <property type="component" value="Chromosome"/>
</dbReference>
<dbReference type="GO" id="GO:0031522">
    <property type="term" value="C:cell envelope Sec protein transport complex"/>
    <property type="evidence" value="ECO:0007669"/>
    <property type="project" value="TreeGrafter"/>
</dbReference>
<dbReference type="GO" id="GO:0005829">
    <property type="term" value="C:cytosol"/>
    <property type="evidence" value="ECO:0007669"/>
    <property type="project" value="TreeGrafter"/>
</dbReference>
<dbReference type="GO" id="GO:0005886">
    <property type="term" value="C:plasma membrane"/>
    <property type="evidence" value="ECO:0007669"/>
    <property type="project" value="UniProtKB-SubCell"/>
</dbReference>
<dbReference type="GO" id="GO:0005524">
    <property type="term" value="F:ATP binding"/>
    <property type="evidence" value="ECO:0007669"/>
    <property type="project" value="UniProtKB-UniRule"/>
</dbReference>
<dbReference type="GO" id="GO:0008564">
    <property type="term" value="F:protein-exporting ATPase activity"/>
    <property type="evidence" value="ECO:0007669"/>
    <property type="project" value="UniProtKB-EC"/>
</dbReference>
<dbReference type="GO" id="GO:0065002">
    <property type="term" value="P:intracellular protein transmembrane transport"/>
    <property type="evidence" value="ECO:0007669"/>
    <property type="project" value="UniProtKB-UniRule"/>
</dbReference>
<dbReference type="GO" id="GO:0017038">
    <property type="term" value="P:protein import"/>
    <property type="evidence" value="ECO:0007669"/>
    <property type="project" value="InterPro"/>
</dbReference>
<dbReference type="GO" id="GO:0006605">
    <property type="term" value="P:protein targeting"/>
    <property type="evidence" value="ECO:0007669"/>
    <property type="project" value="UniProtKB-UniRule"/>
</dbReference>
<dbReference type="GO" id="GO:0043952">
    <property type="term" value="P:protein transport by the Sec complex"/>
    <property type="evidence" value="ECO:0007669"/>
    <property type="project" value="TreeGrafter"/>
</dbReference>
<dbReference type="CDD" id="cd17928">
    <property type="entry name" value="DEXDc_SecA"/>
    <property type="match status" value="1"/>
</dbReference>
<dbReference type="CDD" id="cd18803">
    <property type="entry name" value="SF2_C_secA"/>
    <property type="match status" value="1"/>
</dbReference>
<dbReference type="FunFam" id="3.40.50.300:FF:000429">
    <property type="entry name" value="Preprotein translocase subunit SecA"/>
    <property type="match status" value="1"/>
</dbReference>
<dbReference type="FunFam" id="3.40.50.300:FF:001575">
    <property type="entry name" value="Protein translocase subunit SecA 2"/>
    <property type="match status" value="1"/>
</dbReference>
<dbReference type="Gene3D" id="1.10.3060.10">
    <property type="entry name" value="Helical scaffold and wing domains of SecA"/>
    <property type="match status" value="1"/>
</dbReference>
<dbReference type="Gene3D" id="3.40.50.300">
    <property type="entry name" value="P-loop containing nucleotide triphosphate hydrolases"/>
    <property type="match status" value="2"/>
</dbReference>
<dbReference type="Gene3D" id="3.90.1440.10">
    <property type="entry name" value="SecA, preprotein cross-linking domain"/>
    <property type="match status" value="1"/>
</dbReference>
<dbReference type="HAMAP" id="MF_01382">
    <property type="entry name" value="SecA"/>
    <property type="match status" value="1"/>
</dbReference>
<dbReference type="InterPro" id="IPR014001">
    <property type="entry name" value="Helicase_ATP-bd"/>
</dbReference>
<dbReference type="InterPro" id="IPR001650">
    <property type="entry name" value="Helicase_C-like"/>
</dbReference>
<dbReference type="InterPro" id="IPR027417">
    <property type="entry name" value="P-loop_NTPase"/>
</dbReference>
<dbReference type="InterPro" id="IPR000185">
    <property type="entry name" value="SecA"/>
</dbReference>
<dbReference type="InterPro" id="IPR022490">
    <property type="entry name" value="SecA2"/>
</dbReference>
<dbReference type="InterPro" id="IPR011115">
    <property type="entry name" value="SecA_DEAD"/>
</dbReference>
<dbReference type="InterPro" id="IPR014018">
    <property type="entry name" value="SecA_motor_DEAD"/>
</dbReference>
<dbReference type="InterPro" id="IPR011130">
    <property type="entry name" value="SecA_preprotein_X-link_dom"/>
</dbReference>
<dbReference type="InterPro" id="IPR044722">
    <property type="entry name" value="SecA_SF2_C"/>
</dbReference>
<dbReference type="InterPro" id="IPR011116">
    <property type="entry name" value="SecA_Wing/Scaffold"/>
</dbReference>
<dbReference type="InterPro" id="IPR036266">
    <property type="entry name" value="SecA_Wing/Scaffold_sf"/>
</dbReference>
<dbReference type="InterPro" id="IPR036670">
    <property type="entry name" value="SecA_X-link_sf"/>
</dbReference>
<dbReference type="NCBIfam" id="NF006630">
    <property type="entry name" value="PRK09200.1"/>
    <property type="match status" value="1"/>
</dbReference>
<dbReference type="NCBIfam" id="TIGR03714">
    <property type="entry name" value="secA2"/>
    <property type="match status" value="1"/>
</dbReference>
<dbReference type="PANTHER" id="PTHR30612:SF0">
    <property type="entry name" value="CHLOROPLAST PROTEIN-TRANSPORTING ATPASE"/>
    <property type="match status" value="1"/>
</dbReference>
<dbReference type="PANTHER" id="PTHR30612">
    <property type="entry name" value="SECA INNER MEMBRANE COMPONENT OF SEC PROTEIN SECRETION SYSTEM"/>
    <property type="match status" value="1"/>
</dbReference>
<dbReference type="Pfam" id="PF21090">
    <property type="entry name" value="P-loop_SecA"/>
    <property type="match status" value="1"/>
</dbReference>
<dbReference type="Pfam" id="PF07517">
    <property type="entry name" value="SecA_DEAD"/>
    <property type="match status" value="1"/>
</dbReference>
<dbReference type="Pfam" id="PF01043">
    <property type="entry name" value="SecA_PP_bind"/>
    <property type="match status" value="1"/>
</dbReference>
<dbReference type="Pfam" id="PF07516">
    <property type="entry name" value="SecA_SW"/>
    <property type="match status" value="1"/>
</dbReference>
<dbReference type="PRINTS" id="PR00906">
    <property type="entry name" value="SECA"/>
</dbReference>
<dbReference type="SMART" id="SM00957">
    <property type="entry name" value="SecA_DEAD"/>
    <property type="match status" value="1"/>
</dbReference>
<dbReference type="SMART" id="SM00958">
    <property type="entry name" value="SecA_PP_bind"/>
    <property type="match status" value="1"/>
</dbReference>
<dbReference type="SUPFAM" id="SSF81886">
    <property type="entry name" value="Helical scaffold and wing domains of SecA"/>
    <property type="match status" value="1"/>
</dbReference>
<dbReference type="SUPFAM" id="SSF52540">
    <property type="entry name" value="P-loop containing nucleoside triphosphate hydrolases"/>
    <property type="match status" value="2"/>
</dbReference>
<dbReference type="SUPFAM" id="SSF81767">
    <property type="entry name" value="Pre-protein crosslinking domain of SecA"/>
    <property type="match status" value="1"/>
</dbReference>
<dbReference type="PROSITE" id="PS51196">
    <property type="entry name" value="SECA_MOTOR_DEAD"/>
    <property type="match status" value="1"/>
</dbReference>
<keyword id="KW-0067">ATP-binding</keyword>
<keyword id="KW-1003">Cell membrane</keyword>
<keyword id="KW-0963">Cytoplasm</keyword>
<keyword id="KW-0472">Membrane</keyword>
<keyword id="KW-0547">Nucleotide-binding</keyword>
<keyword id="KW-0653">Protein transport</keyword>
<keyword id="KW-1278">Translocase</keyword>
<keyword id="KW-0811">Translocation</keyword>
<keyword id="KW-0813">Transport</keyword>
<feature type="chain" id="PRO_0000318427" description="Protein translocase subunit SecA 2">
    <location>
        <begin position="1"/>
        <end position="796"/>
    </location>
</feature>
<feature type="binding site" evidence="1">
    <location>
        <position position="84"/>
    </location>
    <ligand>
        <name>ATP</name>
        <dbReference type="ChEBI" id="CHEBI:30616"/>
    </ligand>
</feature>
<feature type="binding site" evidence="1">
    <location>
        <begin position="102"/>
        <end position="106"/>
    </location>
    <ligand>
        <name>ATP</name>
        <dbReference type="ChEBI" id="CHEBI:30616"/>
    </ligand>
</feature>
<feature type="binding site" evidence="1">
    <location>
        <position position="496"/>
    </location>
    <ligand>
        <name>ATP</name>
        <dbReference type="ChEBI" id="CHEBI:30616"/>
    </ligand>
</feature>
<evidence type="ECO:0000255" key="1">
    <source>
        <dbReference type="HAMAP-Rule" id="MF_01382"/>
    </source>
</evidence>
<protein>
    <recommendedName>
        <fullName evidence="1">Protein translocase subunit SecA 2</fullName>
        <ecNumber evidence="1">7.4.2.8</ecNumber>
    </recommendedName>
</protein>
<gene>
    <name evidence="1" type="primary">secA2</name>
    <name type="ordered locus">SAV2649</name>
</gene>